<reference key="1">
    <citation type="submission" date="2006-08" db="EMBL/GenBank/DDBJ databases">
        <title>Complete sequence of Maricaulis maris MCS10.</title>
        <authorList>
            <consortium name="US DOE Joint Genome Institute"/>
            <person name="Copeland A."/>
            <person name="Lucas S."/>
            <person name="Lapidus A."/>
            <person name="Barry K."/>
            <person name="Detter J.C."/>
            <person name="Glavina del Rio T."/>
            <person name="Hammon N."/>
            <person name="Israni S."/>
            <person name="Dalin E."/>
            <person name="Tice H."/>
            <person name="Pitluck S."/>
            <person name="Saunders E."/>
            <person name="Brettin T."/>
            <person name="Bruce D."/>
            <person name="Han C."/>
            <person name="Tapia R."/>
            <person name="Gilna P."/>
            <person name="Schmutz J."/>
            <person name="Larimer F."/>
            <person name="Land M."/>
            <person name="Hauser L."/>
            <person name="Kyrpides N."/>
            <person name="Mikhailova N."/>
            <person name="Viollier P."/>
            <person name="Stephens C."/>
            <person name="Richardson P."/>
        </authorList>
    </citation>
    <scope>NUCLEOTIDE SEQUENCE [LARGE SCALE GENOMIC DNA]</scope>
    <source>
        <strain>MCS10</strain>
    </source>
</reference>
<proteinExistence type="inferred from homology"/>
<organism>
    <name type="scientific">Maricaulis maris (strain MCS10)</name>
    <name type="common">Caulobacter maris</name>
    <dbReference type="NCBI Taxonomy" id="394221"/>
    <lineage>
        <taxon>Bacteria</taxon>
        <taxon>Pseudomonadati</taxon>
        <taxon>Pseudomonadota</taxon>
        <taxon>Alphaproteobacteria</taxon>
        <taxon>Maricaulales</taxon>
        <taxon>Maricaulaceae</taxon>
        <taxon>Maricaulis</taxon>
    </lineage>
</organism>
<feature type="chain" id="PRO_0000362125" description="Kynurenine formamidase">
    <location>
        <begin position="1"/>
        <end position="209"/>
    </location>
</feature>
<feature type="active site" description="Proton donor/acceptor" evidence="1">
    <location>
        <position position="58"/>
    </location>
</feature>
<feature type="binding site" evidence="1">
    <location>
        <position position="18"/>
    </location>
    <ligand>
        <name>substrate</name>
    </ligand>
</feature>
<feature type="binding site" evidence="1">
    <location>
        <position position="48"/>
    </location>
    <ligand>
        <name>Zn(2+)</name>
        <dbReference type="ChEBI" id="CHEBI:29105"/>
        <label>1</label>
    </ligand>
</feature>
<feature type="binding site" evidence="1">
    <location>
        <position position="52"/>
    </location>
    <ligand>
        <name>Zn(2+)</name>
        <dbReference type="ChEBI" id="CHEBI:29105"/>
        <label>1</label>
    </ligand>
</feature>
<feature type="binding site" evidence="1">
    <location>
        <position position="54"/>
    </location>
    <ligand>
        <name>Zn(2+)</name>
        <dbReference type="ChEBI" id="CHEBI:29105"/>
        <label>1</label>
    </ligand>
</feature>
<feature type="binding site" evidence="1">
    <location>
        <position position="54"/>
    </location>
    <ligand>
        <name>Zn(2+)</name>
        <dbReference type="ChEBI" id="CHEBI:29105"/>
        <label>2</label>
    </ligand>
</feature>
<feature type="binding site" evidence="1">
    <location>
        <position position="160"/>
    </location>
    <ligand>
        <name>Zn(2+)</name>
        <dbReference type="ChEBI" id="CHEBI:29105"/>
        <label>2</label>
    </ligand>
</feature>
<feature type="binding site" evidence="1">
    <location>
        <position position="172"/>
    </location>
    <ligand>
        <name>Zn(2+)</name>
        <dbReference type="ChEBI" id="CHEBI:29105"/>
        <label>1</label>
    </ligand>
</feature>
<feature type="binding site" evidence="1">
    <location>
        <position position="172"/>
    </location>
    <ligand>
        <name>Zn(2+)</name>
        <dbReference type="ChEBI" id="CHEBI:29105"/>
        <label>2</label>
    </ligand>
</feature>
<comment type="function">
    <text evidence="1">Catalyzes the hydrolysis of N-formyl-L-kynurenine to L-kynurenine, the second step in the kynurenine pathway of tryptophan degradation.</text>
</comment>
<comment type="catalytic activity">
    <reaction evidence="1">
        <text>N-formyl-L-kynurenine + H2O = L-kynurenine + formate + H(+)</text>
        <dbReference type="Rhea" id="RHEA:13009"/>
        <dbReference type="ChEBI" id="CHEBI:15377"/>
        <dbReference type="ChEBI" id="CHEBI:15378"/>
        <dbReference type="ChEBI" id="CHEBI:15740"/>
        <dbReference type="ChEBI" id="CHEBI:57959"/>
        <dbReference type="ChEBI" id="CHEBI:58629"/>
        <dbReference type="EC" id="3.5.1.9"/>
    </reaction>
</comment>
<comment type="cofactor">
    <cofactor evidence="1">
        <name>Zn(2+)</name>
        <dbReference type="ChEBI" id="CHEBI:29105"/>
    </cofactor>
    <text evidence="1">Binds 2 zinc ions per subunit.</text>
</comment>
<comment type="pathway">
    <text evidence="1">Amino-acid degradation; L-tryptophan degradation via kynurenine pathway; L-kynurenine from L-tryptophan: step 2/2.</text>
</comment>
<comment type="subunit">
    <text evidence="1">Homodimer.</text>
</comment>
<comment type="similarity">
    <text evidence="1">Belongs to the Cyclase 1 superfamily. KynB family.</text>
</comment>
<accession>Q0APM5</accession>
<keyword id="KW-0378">Hydrolase</keyword>
<keyword id="KW-0479">Metal-binding</keyword>
<keyword id="KW-1185">Reference proteome</keyword>
<keyword id="KW-0823">Tryptophan catabolism</keyword>
<keyword id="KW-0862">Zinc</keyword>
<dbReference type="EC" id="3.5.1.9" evidence="1"/>
<dbReference type="EMBL" id="CP000449">
    <property type="protein sequence ID" value="ABI65762.1"/>
    <property type="molecule type" value="Genomic_DNA"/>
</dbReference>
<dbReference type="RefSeq" id="WP_011643409.1">
    <property type="nucleotide sequence ID" value="NC_008347.1"/>
</dbReference>
<dbReference type="SMR" id="Q0APM5"/>
<dbReference type="STRING" id="394221.Mmar10_1470"/>
<dbReference type="KEGG" id="mmr:Mmar10_1470"/>
<dbReference type="eggNOG" id="COG1878">
    <property type="taxonomic scope" value="Bacteria"/>
</dbReference>
<dbReference type="HOGENOM" id="CLU_030671_3_1_5"/>
<dbReference type="OrthoDB" id="9777007at2"/>
<dbReference type="UniPathway" id="UPA00333">
    <property type="reaction ID" value="UER00454"/>
</dbReference>
<dbReference type="Proteomes" id="UP000001964">
    <property type="component" value="Chromosome"/>
</dbReference>
<dbReference type="GO" id="GO:0004061">
    <property type="term" value="F:arylformamidase activity"/>
    <property type="evidence" value="ECO:0000250"/>
    <property type="project" value="UniProtKB"/>
</dbReference>
<dbReference type="GO" id="GO:0004328">
    <property type="term" value="F:formamidase activity"/>
    <property type="evidence" value="ECO:0007669"/>
    <property type="project" value="InterPro"/>
</dbReference>
<dbReference type="GO" id="GO:0008270">
    <property type="term" value="F:zinc ion binding"/>
    <property type="evidence" value="ECO:0007669"/>
    <property type="project" value="UniProtKB-UniRule"/>
</dbReference>
<dbReference type="GO" id="GO:0043420">
    <property type="term" value="P:anthranilate metabolic process"/>
    <property type="evidence" value="ECO:0000250"/>
    <property type="project" value="UniProtKB"/>
</dbReference>
<dbReference type="GO" id="GO:0019441">
    <property type="term" value="P:L-tryptophan catabolic process to kynurenine"/>
    <property type="evidence" value="ECO:0000250"/>
    <property type="project" value="UniProtKB"/>
</dbReference>
<dbReference type="FunFam" id="3.50.30.50:FF:000001">
    <property type="entry name" value="Kynurenine formamidase"/>
    <property type="match status" value="1"/>
</dbReference>
<dbReference type="Gene3D" id="3.50.30.50">
    <property type="entry name" value="Putative cyclase"/>
    <property type="match status" value="1"/>
</dbReference>
<dbReference type="HAMAP" id="MF_01969">
    <property type="entry name" value="KynB"/>
    <property type="match status" value="1"/>
</dbReference>
<dbReference type="InterPro" id="IPR007325">
    <property type="entry name" value="KFase/CYL"/>
</dbReference>
<dbReference type="InterPro" id="IPR037175">
    <property type="entry name" value="KFase_sf"/>
</dbReference>
<dbReference type="InterPro" id="IPR017484">
    <property type="entry name" value="Kynurenine_formamidase_bac"/>
</dbReference>
<dbReference type="NCBIfam" id="TIGR03035">
    <property type="entry name" value="trp_arylform"/>
    <property type="match status" value="1"/>
</dbReference>
<dbReference type="PANTHER" id="PTHR31118">
    <property type="entry name" value="CYCLASE-LIKE PROTEIN 2"/>
    <property type="match status" value="1"/>
</dbReference>
<dbReference type="PANTHER" id="PTHR31118:SF32">
    <property type="entry name" value="KYNURENINE FORMAMIDASE"/>
    <property type="match status" value="1"/>
</dbReference>
<dbReference type="Pfam" id="PF04199">
    <property type="entry name" value="Cyclase"/>
    <property type="match status" value="1"/>
</dbReference>
<dbReference type="SUPFAM" id="SSF102198">
    <property type="entry name" value="Putative cyclase"/>
    <property type="match status" value="1"/>
</dbReference>
<name>KYNB_MARMM</name>
<gene>
    <name evidence="1" type="primary">kynB</name>
    <name type="ordered locus">Mmar10_1470</name>
</gene>
<evidence type="ECO:0000255" key="1">
    <source>
        <dbReference type="HAMAP-Rule" id="MF_01969"/>
    </source>
</evidence>
<sequence>MAKMWDISQTLRPDLPVWPGDTAFACDEVWSIGPDCPVQVSRLTLSTHSGAHADAPSHYDQAGDDIASTPLELYVGPCRLVTASGNGPHVQPADLDWAAIDGATRVLVRTYAKFPADDWDPDFRALHADTIERLAATGCRLIGVDAASLDPQTSKTMDAHHAVQRHDMRILEGLVFDGVPDGHYELIALPLKIAGADAAPLRAVLRELP</sequence>
<protein>
    <recommendedName>
        <fullName evidence="1">Kynurenine formamidase</fullName>
        <shortName evidence="1">KFA</shortName>
        <shortName evidence="1">KFase</shortName>
        <ecNumber evidence="1">3.5.1.9</ecNumber>
    </recommendedName>
    <alternativeName>
        <fullName evidence="1">Arylformamidase</fullName>
    </alternativeName>
    <alternativeName>
        <fullName evidence="1">N-formylkynurenine formamidase</fullName>
        <shortName evidence="1">FKF</shortName>
    </alternativeName>
</protein>